<reference key="1">
    <citation type="submission" date="2006-03" db="EMBL/GenBank/DDBJ databases">
        <title>Complete sequence of Shewanella denitrificans OS217.</title>
        <authorList>
            <consortium name="US DOE Joint Genome Institute"/>
            <person name="Copeland A."/>
            <person name="Lucas S."/>
            <person name="Lapidus A."/>
            <person name="Barry K."/>
            <person name="Detter J.C."/>
            <person name="Glavina del Rio T."/>
            <person name="Hammon N."/>
            <person name="Israni S."/>
            <person name="Dalin E."/>
            <person name="Tice H."/>
            <person name="Pitluck S."/>
            <person name="Brettin T."/>
            <person name="Bruce D."/>
            <person name="Han C."/>
            <person name="Tapia R."/>
            <person name="Gilna P."/>
            <person name="Kiss H."/>
            <person name="Schmutz J."/>
            <person name="Larimer F."/>
            <person name="Land M."/>
            <person name="Hauser L."/>
            <person name="Kyrpides N."/>
            <person name="Lykidis A."/>
            <person name="Richardson P."/>
        </authorList>
    </citation>
    <scope>NUCLEOTIDE SEQUENCE [LARGE SCALE GENOMIC DNA]</scope>
    <source>
        <strain>OS217 / ATCC BAA-1090 / DSM 15013</strain>
    </source>
</reference>
<dbReference type="EC" id="2.7.1.148" evidence="1"/>
<dbReference type="EMBL" id="CP000302">
    <property type="protein sequence ID" value="ABE54205.1"/>
    <property type="molecule type" value="Genomic_DNA"/>
</dbReference>
<dbReference type="RefSeq" id="WP_011495369.1">
    <property type="nucleotide sequence ID" value="NC_007954.1"/>
</dbReference>
<dbReference type="SMR" id="Q12QS1"/>
<dbReference type="STRING" id="318161.Sden_0917"/>
<dbReference type="KEGG" id="sdn:Sden_0917"/>
<dbReference type="eggNOG" id="COG1947">
    <property type="taxonomic scope" value="Bacteria"/>
</dbReference>
<dbReference type="HOGENOM" id="CLU_053057_3_0_6"/>
<dbReference type="OrthoDB" id="9809438at2"/>
<dbReference type="UniPathway" id="UPA00056">
    <property type="reaction ID" value="UER00094"/>
</dbReference>
<dbReference type="Proteomes" id="UP000001982">
    <property type="component" value="Chromosome"/>
</dbReference>
<dbReference type="GO" id="GO:0050515">
    <property type="term" value="F:4-(cytidine 5'-diphospho)-2-C-methyl-D-erythritol kinase activity"/>
    <property type="evidence" value="ECO:0007669"/>
    <property type="project" value="UniProtKB-UniRule"/>
</dbReference>
<dbReference type="GO" id="GO:0005524">
    <property type="term" value="F:ATP binding"/>
    <property type="evidence" value="ECO:0007669"/>
    <property type="project" value="UniProtKB-UniRule"/>
</dbReference>
<dbReference type="GO" id="GO:0019288">
    <property type="term" value="P:isopentenyl diphosphate biosynthetic process, methylerythritol 4-phosphate pathway"/>
    <property type="evidence" value="ECO:0007669"/>
    <property type="project" value="UniProtKB-UniRule"/>
</dbReference>
<dbReference type="GO" id="GO:0016114">
    <property type="term" value="P:terpenoid biosynthetic process"/>
    <property type="evidence" value="ECO:0007669"/>
    <property type="project" value="InterPro"/>
</dbReference>
<dbReference type="Gene3D" id="3.30.230.10">
    <property type="match status" value="1"/>
</dbReference>
<dbReference type="Gene3D" id="3.30.70.890">
    <property type="entry name" value="GHMP kinase, C-terminal domain"/>
    <property type="match status" value="1"/>
</dbReference>
<dbReference type="HAMAP" id="MF_00061">
    <property type="entry name" value="IspE"/>
    <property type="match status" value="1"/>
</dbReference>
<dbReference type="InterPro" id="IPR013750">
    <property type="entry name" value="GHMP_kinase_C_dom"/>
</dbReference>
<dbReference type="InterPro" id="IPR036554">
    <property type="entry name" value="GHMP_kinase_C_sf"/>
</dbReference>
<dbReference type="InterPro" id="IPR006204">
    <property type="entry name" value="GHMP_kinase_N_dom"/>
</dbReference>
<dbReference type="InterPro" id="IPR004424">
    <property type="entry name" value="IspE"/>
</dbReference>
<dbReference type="InterPro" id="IPR020568">
    <property type="entry name" value="Ribosomal_Su5_D2-typ_SF"/>
</dbReference>
<dbReference type="InterPro" id="IPR014721">
    <property type="entry name" value="Ribsml_uS5_D2-typ_fold_subgr"/>
</dbReference>
<dbReference type="NCBIfam" id="TIGR00154">
    <property type="entry name" value="ispE"/>
    <property type="match status" value="1"/>
</dbReference>
<dbReference type="PANTHER" id="PTHR43527">
    <property type="entry name" value="4-DIPHOSPHOCYTIDYL-2-C-METHYL-D-ERYTHRITOL KINASE, CHLOROPLASTIC"/>
    <property type="match status" value="1"/>
</dbReference>
<dbReference type="PANTHER" id="PTHR43527:SF2">
    <property type="entry name" value="4-DIPHOSPHOCYTIDYL-2-C-METHYL-D-ERYTHRITOL KINASE, CHLOROPLASTIC"/>
    <property type="match status" value="1"/>
</dbReference>
<dbReference type="Pfam" id="PF08544">
    <property type="entry name" value="GHMP_kinases_C"/>
    <property type="match status" value="1"/>
</dbReference>
<dbReference type="Pfam" id="PF00288">
    <property type="entry name" value="GHMP_kinases_N"/>
    <property type="match status" value="1"/>
</dbReference>
<dbReference type="PIRSF" id="PIRSF010376">
    <property type="entry name" value="IspE"/>
    <property type="match status" value="1"/>
</dbReference>
<dbReference type="SUPFAM" id="SSF55060">
    <property type="entry name" value="GHMP Kinase, C-terminal domain"/>
    <property type="match status" value="1"/>
</dbReference>
<dbReference type="SUPFAM" id="SSF54211">
    <property type="entry name" value="Ribosomal protein S5 domain 2-like"/>
    <property type="match status" value="1"/>
</dbReference>
<proteinExistence type="inferred from homology"/>
<protein>
    <recommendedName>
        <fullName evidence="1">4-diphosphocytidyl-2-C-methyl-D-erythritol kinase</fullName>
        <shortName evidence="1">CMK</shortName>
        <ecNumber evidence="1">2.7.1.148</ecNumber>
    </recommendedName>
    <alternativeName>
        <fullName evidence="1">4-(cytidine-5'-diphospho)-2-C-methyl-D-erythritol kinase</fullName>
    </alternativeName>
</protein>
<keyword id="KW-0067">ATP-binding</keyword>
<keyword id="KW-0414">Isoprene biosynthesis</keyword>
<keyword id="KW-0418">Kinase</keyword>
<keyword id="KW-0547">Nucleotide-binding</keyword>
<keyword id="KW-1185">Reference proteome</keyword>
<keyword id="KW-0808">Transferase</keyword>
<sequence length="284" mass="31043">MRPPISKSWPAPAKLNLFLHVTGQRDDGYHELQTLFQFIDHCDYLDFQVNLCGEIKLHSELSKVVADKDNLILQAAKSLQKHAGVTQGADIWLEKLLPMGGGLGGGSSDAATTLVALNALWNINYHVDILAEIGLKLGADVPVFIHGLASFAEGVGEQLKPVLPAEKWYLVLVPNVHVSTQAIFQSPELTRNTPKLSLSNLMSQHWSNDCEKLVIAHYPQVANALSWLVEYAPSRMTGTGACVFGEFEQEQQALAVLAELPPNMTGFVAKGMNRSPLLERLANA</sequence>
<evidence type="ECO:0000255" key="1">
    <source>
        <dbReference type="HAMAP-Rule" id="MF_00061"/>
    </source>
</evidence>
<gene>
    <name evidence="1" type="primary">ispE</name>
    <name type="ordered locus">Sden_0917</name>
</gene>
<name>ISPE_SHEDO</name>
<comment type="function">
    <text evidence="1">Catalyzes the phosphorylation of the position 2 hydroxy group of 4-diphosphocytidyl-2C-methyl-D-erythritol.</text>
</comment>
<comment type="catalytic activity">
    <reaction evidence="1">
        <text>4-CDP-2-C-methyl-D-erythritol + ATP = 4-CDP-2-C-methyl-D-erythritol 2-phosphate + ADP + H(+)</text>
        <dbReference type="Rhea" id="RHEA:18437"/>
        <dbReference type="ChEBI" id="CHEBI:15378"/>
        <dbReference type="ChEBI" id="CHEBI:30616"/>
        <dbReference type="ChEBI" id="CHEBI:57823"/>
        <dbReference type="ChEBI" id="CHEBI:57919"/>
        <dbReference type="ChEBI" id="CHEBI:456216"/>
        <dbReference type="EC" id="2.7.1.148"/>
    </reaction>
</comment>
<comment type="pathway">
    <text evidence="1">Isoprenoid biosynthesis; isopentenyl diphosphate biosynthesis via DXP pathway; isopentenyl diphosphate from 1-deoxy-D-xylulose 5-phosphate: step 3/6.</text>
</comment>
<comment type="similarity">
    <text evidence="1">Belongs to the GHMP kinase family. IspE subfamily.</text>
</comment>
<accession>Q12QS1</accession>
<organism>
    <name type="scientific">Shewanella denitrificans (strain OS217 / ATCC BAA-1090 / DSM 15013)</name>
    <dbReference type="NCBI Taxonomy" id="318161"/>
    <lineage>
        <taxon>Bacteria</taxon>
        <taxon>Pseudomonadati</taxon>
        <taxon>Pseudomonadota</taxon>
        <taxon>Gammaproteobacteria</taxon>
        <taxon>Alteromonadales</taxon>
        <taxon>Shewanellaceae</taxon>
        <taxon>Shewanella</taxon>
    </lineage>
</organism>
<feature type="chain" id="PRO_1000007888" description="4-diphosphocytidyl-2-C-methyl-D-erythritol kinase">
    <location>
        <begin position="1"/>
        <end position="284"/>
    </location>
</feature>
<feature type="active site" evidence="1">
    <location>
        <position position="14"/>
    </location>
</feature>
<feature type="active site" evidence="1">
    <location>
        <position position="140"/>
    </location>
</feature>
<feature type="binding site" evidence="1">
    <location>
        <begin position="98"/>
        <end position="108"/>
    </location>
    <ligand>
        <name>ATP</name>
        <dbReference type="ChEBI" id="CHEBI:30616"/>
    </ligand>
</feature>